<protein>
    <recommendedName>
        <fullName evidence="1">Lipoprotein-releasing system ATP-binding protein LolD</fullName>
        <ecNumber evidence="1">7.6.2.-</ecNumber>
    </recommendedName>
</protein>
<name>LOLD_PARXL</name>
<dbReference type="EC" id="7.6.2.-" evidence="1"/>
<dbReference type="EMBL" id="CP000270">
    <property type="protein sequence ID" value="ABE31388.1"/>
    <property type="molecule type" value="Genomic_DNA"/>
</dbReference>
<dbReference type="RefSeq" id="WP_011488967.1">
    <property type="nucleotide sequence ID" value="NC_007951.1"/>
</dbReference>
<dbReference type="SMR" id="Q13X01"/>
<dbReference type="STRING" id="266265.Bxe_A1567"/>
<dbReference type="KEGG" id="bxe:Bxe_A1567"/>
<dbReference type="PATRIC" id="fig|266265.5.peg.2991"/>
<dbReference type="eggNOG" id="COG1136">
    <property type="taxonomic scope" value="Bacteria"/>
</dbReference>
<dbReference type="OrthoDB" id="4814201at2"/>
<dbReference type="Proteomes" id="UP000001817">
    <property type="component" value="Chromosome 1"/>
</dbReference>
<dbReference type="GO" id="GO:0005886">
    <property type="term" value="C:plasma membrane"/>
    <property type="evidence" value="ECO:0007669"/>
    <property type="project" value="UniProtKB-SubCell"/>
</dbReference>
<dbReference type="GO" id="GO:0005524">
    <property type="term" value="F:ATP binding"/>
    <property type="evidence" value="ECO:0007669"/>
    <property type="project" value="UniProtKB-KW"/>
</dbReference>
<dbReference type="GO" id="GO:0016887">
    <property type="term" value="F:ATP hydrolysis activity"/>
    <property type="evidence" value="ECO:0007669"/>
    <property type="project" value="InterPro"/>
</dbReference>
<dbReference type="GO" id="GO:0022857">
    <property type="term" value="F:transmembrane transporter activity"/>
    <property type="evidence" value="ECO:0007669"/>
    <property type="project" value="TreeGrafter"/>
</dbReference>
<dbReference type="GO" id="GO:0044874">
    <property type="term" value="P:lipoprotein localization to outer membrane"/>
    <property type="evidence" value="ECO:0007669"/>
    <property type="project" value="TreeGrafter"/>
</dbReference>
<dbReference type="GO" id="GO:0089705">
    <property type="term" value="P:protein localization to outer membrane"/>
    <property type="evidence" value="ECO:0007669"/>
    <property type="project" value="TreeGrafter"/>
</dbReference>
<dbReference type="CDD" id="cd03255">
    <property type="entry name" value="ABC_MJ0796_LolCDE_FtsE"/>
    <property type="match status" value="1"/>
</dbReference>
<dbReference type="FunFam" id="3.40.50.300:FF:000230">
    <property type="entry name" value="Lipoprotein-releasing system ATP-binding protein LolD"/>
    <property type="match status" value="1"/>
</dbReference>
<dbReference type="Gene3D" id="3.40.50.300">
    <property type="entry name" value="P-loop containing nucleotide triphosphate hydrolases"/>
    <property type="match status" value="1"/>
</dbReference>
<dbReference type="InterPro" id="IPR003593">
    <property type="entry name" value="AAA+_ATPase"/>
</dbReference>
<dbReference type="InterPro" id="IPR003439">
    <property type="entry name" value="ABC_transporter-like_ATP-bd"/>
</dbReference>
<dbReference type="InterPro" id="IPR017871">
    <property type="entry name" value="ABC_transporter-like_CS"/>
</dbReference>
<dbReference type="InterPro" id="IPR015854">
    <property type="entry name" value="ABC_transpr_LolD-like"/>
</dbReference>
<dbReference type="InterPro" id="IPR011924">
    <property type="entry name" value="LolD_lipo_ATP-bd"/>
</dbReference>
<dbReference type="InterPro" id="IPR017911">
    <property type="entry name" value="MacB-like_ATP-bd"/>
</dbReference>
<dbReference type="InterPro" id="IPR027417">
    <property type="entry name" value="P-loop_NTPase"/>
</dbReference>
<dbReference type="NCBIfam" id="TIGR02211">
    <property type="entry name" value="LolD_lipo_ex"/>
    <property type="match status" value="1"/>
</dbReference>
<dbReference type="PANTHER" id="PTHR24220">
    <property type="entry name" value="IMPORT ATP-BINDING PROTEIN"/>
    <property type="match status" value="1"/>
</dbReference>
<dbReference type="PANTHER" id="PTHR24220:SF689">
    <property type="entry name" value="LIPOPROTEIN-RELEASING SYSTEM ATP-BINDING PROTEIN LOLD"/>
    <property type="match status" value="1"/>
</dbReference>
<dbReference type="Pfam" id="PF00005">
    <property type="entry name" value="ABC_tran"/>
    <property type="match status" value="1"/>
</dbReference>
<dbReference type="SMART" id="SM00382">
    <property type="entry name" value="AAA"/>
    <property type="match status" value="1"/>
</dbReference>
<dbReference type="SUPFAM" id="SSF52540">
    <property type="entry name" value="P-loop containing nucleoside triphosphate hydrolases"/>
    <property type="match status" value="1"/>
</dbReference>
<dbReference type="PROSITE" id="PS00211">
    <property type="entry name" value="ABC_TRANSPORTER_1"/>
    <property type="match status" value="1"/>
</dbReference>
<dbReference type="PROSITE" id="PS50893">
    <property type="entry name" value="ABC_TRANSPORTER_2"/>
    <property type="match status" value="1"/>
</dbReference>
<dbReference type="PROSITE" id="PS51244">
    <property type="entry name" value="LOLD"/>
    <property type="match status" value="1"/>
</dbReference>
<keyword id="KW-0067">ATP-binding</keyword>
<keyword id="KW-0997">Cell inner membrane</keyword>
<keyword id="KW-1003">Cell membrane</keyword>
<keyword id="KW-0472">Membrane</keyword>
<keyword id="KW-0547">Nucleotide-binding</keyword>
<keyword id="KW-1185">Reference proteome</keyword>
<keyword id="KW-1278">Translocase</keyword>
<keyword id="KW-0813">Transport</keyword>
<accession>Q13X01</accession>
<feature type="chain" id="PRO_0000272068" description="Lipoprotein-releasing system ATP-binding protein LolD">
    <location>
        <begin position="1"/>
        <end position="247"/>
    </location>
</feature>
<feature type="domain" description="ABC transporter" evidence="1">
    <location>
        <begin position="22"/>
        <end position="247"/>
    </location>
</feature>
<feature type="binding site" evidence="1">
    <location>
        <begin position="58"/>
        <end position="65"/>
    </location>
    <ligand>
        <name>ATP</name>
        <dbReference type="ChEBI" id="CHEBI:30616"/>
    </ligand>
</feature>
<evidence type="ECO:0000255" key="1">
    <source>
        <dbReference type="HAMAP-Rule" id="MF_01708"/>
    </source>
</evidence>
<organism>
    <name type="scientific">Paraburkholderia xenovorans (strain LB400)</name>
    <dbReference type="NCBI Taxonomy" id="266265"/>
    <lineage>
        <taxon>Bacteria</taxon>
        <taxon>Pseudomonadati</taxon>
        <taxon>Pseudomonadota</taxon>
        <taxon>Betaproteobacteria</taxon>
        <taxon>Burkholderiales</taxon>
        <taxon>Burkholderiaceae</taxon>
        <taxon>Paraburkholderia</taxon>
    </lineage>
</organism>
<proteinExistence type="inferred from homology"/>
<reference key="1">
    <citation type="journal article" date="2006" name="Proc. Natl. Acad. Sci. U.S.A.">
        <title>Burkholderia xenovorans LB400 harbors a multi-replicon, 9.73-Mbp genome shaped for versatility.</title>
        <authorList>
            <person name="Chain P.S.G."/>
            <person name="Denef V.J."/>
            <person name="Konstantinidis K.T."/>
            <person name="Vergez L.M."/>
            <person name="Agullo L."/>
            <person name="Reyes V.L."/>
            <person name="Hauser L."/>
            <person name="Cordova M."/>
            <person name="Gomez L."/>
            <person name="Gonzalez M."/>
            <person name="Land M."/>
            <person name="Lao V."/>
            <person name="Larimer F."/>
            <person name="LiPuma J.J."/>
            <person name="Mahenthiralingam E."/>
            <person name="Malfatti S.A."/>
            <person name="Marx C.J."/>
            <person name="Parnell J.J."/>
            <person name="Ramette A."/>
            <person name="Richardson P."/>
            <person name="Seeger M."/>
            <person name="Smith D."/>
            <person name="Spilker T."/>
            <person name="Sul W.J."/>
            <person name="Tsoi T.V."/>
            <person name="Ulrich L.E."/>
            <person name="Zhulin I.B."/>
            <person name="Tiedje J.M."/>
        </authorList>
    </citation>
    <scope>NUCLEOTIDE SEQUENCE [LARGE SCALE GENOMIC DNA]</scope>
    <source>
        <strain>LB400</strain>
    </source>
</reference>
<sequence>MNDRSANLSMPSADTVPHPYVLEATGISKSFVQGGLNVTVLNNAQLSVRRGEKLAIVGASGSGKSTLLHVLGGLDDPSAGQVSVMGKPFTRLSERERNDLRNRALGFVYQFHHLLPEFSALDNVAMPLRIRRMSTEAARREALAVLERVGMGHRAKHRPGELSGGERQRVAIARALVTKPACVLADEPTGNLDGGTADTVFNLMLELSQTLETSFVIVTHDPELAGRCDRIMRLRDGVLHEEPPVPV</sequence>
<comment type="function">
    <text evidence="1">Part of the ABC transporter complex LolCDE involved in the translocation of mature outer membrane-directed lipoproteins, from the inner membrane to the periplasmic chaperone, LolA. Responsible for the formation of the LolA-lipoprotein complex in an ATP-dependent manner.</text>
</comment>
<comment type="subunit">
    <text evidence="1">The complex is composed of two ATP-binding proteins (LolD) and two transmembrane proteins (LolC and LolE).</text>
</comment>
<comment type="subcellular location">
    <subcellularLocation>
        <location evidence="1">Cell inner membrane</location>
        <topology evidence="1">Peripheral membrane protein</topology>
    </subcellularLocation>
</comment>
<comment type="similarity">
    <text evidence="1">Belongs to the ABC transporter superfamily. Lipoprotein translocase (TC 3.A.1.125) family.</text>
</comment>
<gene>
    <name evidence="1" type="primary">lolD</name>
    <name type="ordered locus">Bxeno_A2850</name>
    <name type="ORF">Bxe_A1567</name>
</gene>